<protein>
    <recommendedName>
        <fullName>Plastocyanin, chloroplastic</fullName>
    </recommendedName>
</protein>
<comment type="function">
    <text evidence="4">Participates in electron transfer between P700 and the cytochrome b6-f complex in photosystem I.</text>
</comment>
<comment type="cofactor">
    <cofactor evidence="1">
        <name>Cu(2+)</name>
        <dbReference type="ChEBI" id="CHEBI:29036"/>
    </cofactor>
</comment>
<comment type="subcellular location">
    <subcellularLocation>
        <location evidence="2 3 4">Plastid</location>
        <location evidence="2 3 4">Chloroplast thylakoid membrane</location>
        <topology evidence="2 3 4">Peripheral membrane protein</topology>
        <orientation evidence="2 3 4">Lumenal side</orientation>
    </subcellularLocation>
    <text>Loosely bound to the inner thylakoid membrane surface in chloroplasts.</text>
</comment>
<comment type="similarity">
    <text evidence="5">Belongs to the plastocyanin family.</text>
</comment>
<name>PLAS_TETOB</name>
<sequence length="145" mass="14774">MASLMRKAAVAPAKATRTTVKASASLQRVAQAAGVAVAGFSLALSANAANVKLGADSGALVFEPATVTIKAGDSVTWTNNAGFPHNIVFDEDAVPAGVNADALSHDDYLNAPGESYTAKFDTAGEYGYFCEPHQGAGMVGKVIVQ</sequence>
<gene>
    <name type="primary">PETE</name>
    <name type="synonym">PCY1</name>
</gene>
<dbReference type="EMBL" id="AF114235">
    <property type="protein sequence ID" value="AAD03610.1"/>
    <property type="molecule type" value="Genomic_DNA"/>
</dbReference>
<dbReference type="PIR" id="JW0013">
    <property type="entry name" value="JW0013"/>
</dbReference>
<dbReference type="BMRB" id="P26956"/>
<dbReference type="SMR" id="P26956"/>
<dbReference type="OrthoDB" id="197281at2759"/>
<dbReference type="GO" id="GO:0009543">
    <property type="term" value="C:chloroplast thylakoid lumen"/>
    <property type="evidence" value="ECO:0007669"/>
    <property type="project" value="TreeGrafter"/>
</dbReference>
<dbReference type="GO" id="GO:0009535">
    <property type="term" value="C:chloroplast thylakoid membrane"/>
    <property type="evidence" value="ECO:0007669"/>
    <property type="project" value="UniProtKB-SubCell"/>
</dbReference>
<dbReference type="GO" id="GO:0005507">
    <property type="term" value="F:copper ion binding"/>
    <property type="evidence" value="ECO:0007669"/>
    <property type="project" value="InterPro"/>
</dbReference>
<dbReference type="GO" id="GO:0046028">
    <property type="term" value="F:electron transporter, transferring electrons from cytochrome b6/f complex of photosystem II activity"/>
    <property type="evidence" value="ECO:0007669"/>
    <property type="project" value="TreeGrafter"/>
</dbReference>
<dbReference type="CDD" id="cd04219">
    <property type="entry name" value="Plastocyanin"/>
    <property type="match status" value="1"/>
</dbReference>
<dbReference type="Gene3D" id="2.60.40.420">
    <property type="entry name" value="Cupredoxins - blue copper proteins"/>
    <property type="match status" value="1"/>
</dbReference>
<dbReference type="InterPro" id="IPR000923">
    <property type="entry name" value="BlueCu_1"/>
</dbReference>
<dbReference type="InterPro" id="IPR028871">
    <property type="entry name" value="BlueCu_1_BS"/>
</dbReference>
<dbReference type="InterPro" id="IPR001235">
    <property type="entry name" value="Copper_blue_Plastocyanin"/>
</dbReference>
<dbReference type="InterPro" id="IPR008972">
    <property type="entry name" value="Cupredoxin"/>
</dbReference>
<dbReference type="InterPro" id="IPR002387">
    <property type="entry name" value="Plastocyanin"/>
</dbReference>
<dbReference type="NCBIfam" id="TIGR02656">
    <property type="entry name" value="cyanin_plasto"/>
    <property type="match status" value="1"/>
</dbReference>
<dbReference type="PANTHER" id="PTHR34192">
    <property type="entry name" value="PLASTOCYANIN MAJOR ISOFORM, CHLOROPLASTIC-RELATED"/>
    <property type="match status" value="1"/>
</dbReference>
<dbReference type="PANTHER" id="PTHR34192:SF10">
    <property type="entry name" value="PLASTOCYANIN MAJOR ISOFORM, CHLOROPLASTIC-RELATED"/>
    <property type="match status" value="1"/>
</dbReference>
<dbReference type="Pfam" id="PF00127">
    <property type="entry name" value="Copper-bind"/>
    <property type="match status" value="1"/>
</dbReference>
<dbReference type="PRINTS" id="PR00156">
    <property type="entry name" value="COPPERBLUE"/>
</dbReference>
<dbReference type="PRINTS" id="PR00157">
    <property type="entry name" value="PLASTOCYANIN"/>
</dbReference>
<dbReference type="SUPFAM" id="SSF49503">
    <property type="entry name" value="Cupredoxins"/>
    <property type="match status" value="1"/>
</dbReference>
<dbReference type="PROSITE" id="PS00196">
    <property type="entry name" value="COPPER_BLUE"/>
    <property type="match status" value="1"/>
</dbReference>
<proteinExistence type="evidence at protein level"/>
<organism>
    <name type="scientific">Tetradesmus obliquus</name>
    <name type="common">Green alga</name>
    <name type="synonym">Acutodesmus obliquus</name>
    <dbReference type="NCBI Taxonomy" id="3088"/>
    <lineage>
        <taxon>Eukaryota</taxon>
        <taxon>Viridiplantae</taxon>
        <taxon>Chlorophyta</taxon>
        <taxon>core chlorophytes</taxon>
        <taxon>Chlorophyceae</taxon>
        <taxon>CS clade</taxon>
        <taxon>Sphaeropleales</taxon>
        <taxon>Scenedesmaceae</taxon>
        <taxon>Tetradesmus</taxon>
    </lineage>
</organism>
<accession>P26956</accession>
<accession>Q9SEL9</accession>
<reference key="1">
    <citation type="journal article" date="1999" name="J. Phycol.">
        <title>Adaptation of Scenedesmus obliquus (Chlorophyceae) to copper-deficiency: transcriptional regulation of Pcy1 but not Cpx1.</title>
        <authorList>
            <person name="Quinn J.M."/>
            <person name="Merchant S."/>
        </authorList>
    </citation>
    <scope>NUCLEOTIDE SEQUENCE [GENOMIC DNA]</scope>
    <source>
        <strain>272-3a</strain>
    </source>
</reference>
<reference key="2">
    <citation type="journal article" date="1985" name="Chem. Soc. Rev.">
        <title>Structure and electron-transfer reactivity of the blue copper protein plastocyanin.</title>
        <authorList>
            <person name="Sykes A.G."/>
        </authorList>
    </citation>
    <scope>PROTEIN SEQUENCE OF 49-145</scope>
    <scope>FUNCTION</scope>
    <scope>SUBCELLULAR LOCATION</scope>
</reference>
<reference key="3">
    <citation type="journal article" date="1988" name="Inorg. Chem.">
        <title>Kinetic studies on 1:1 electron-transfer reactions involving blue copper proteins. 16. Reactivity of plastocyanin from the green alga Scenedesmus obliquus with inorganic redox partners and related NMR studies.</title>
        <authorList>
            <person name="McGinnis J."/>
            <person name="Sinclair-day J.D."/>
            <person name="Sykes A.G."/>
            <person name="Powls R."/>
            <person name="Moore J."/>
            <person name="Wright P.D."/>
        </authorList>
    </citation>
    <scope>SEQUENCE REVISION TO C-TERMINUS</scope>
</reference>
<reference key="4">
    <citation type="journal article" date="1988" name="Science">
        <title>Three-dimensional solution structure of plastocyanin from the green alga Scenedesmus obliquus.</title>
        <authorList>
            <person name="Moore J.M."/>
            <person name="Case D.A."/>
            <person name="Chazin W.J."/>
            <person name="Gippert G.P."/>
            <person name="Havel T.F."/>
            <person name="Powls R."/>
            <person name="Wright P.E."/>
        </authorList>
    </citation>
    <scope>STRUCTURE BY NMR</scope>
    <scope>SUBCELLULAR LOCATION</scope>
</reference>
<reference key="5">
    <citation type="journal article" date="1988" name="Biochemistry">
        <title>1H NMR studies of plastocyanin from Scenedesmus obliquus: complete sequence-specific assignment, secondary structure analysis, and global fold.</title>
        <authorList>
            <person name="Moore J.M."/>
            <person name="Chazin W.J."/>
            <person name="Powls R."/>
            <person name="Wright P.E."/>
        </authorList>
    </citation>
    <scope>STRUCTURE BY NMR</scope>
    <scope>SUBCELLULAR LOCATION</scope>
</reference>
<evidence type="ECO:0000250" key="1">
    <source>
        <dbReference type="UniProtKB" id="P18068"/>
    </source>
</evidence>
<evidence type="ECO:0000269" key="2">
    <source>
    </source>
</evidence>
<evidence type="ECO:0000269" key="3">
    <source>
    </source>
</evidence>
<evidence type="ECO:0000269" key="4">
    <source ref="2"/>
</evidence>
<evidence type="ECO:0000305" key="5"/>
<keyword id="KW-0150">Chloroplast</keyword>
<keyword id="KW-0186">Copper</keyword>
<keyword id="KW-0903">Direct protein sequencing</keyword>
<keyword id="KW-0249">Electron transport</keyword>
<keyword id="KW-0472">Membrane</keyword>
<keyword id="KW-0479">Metal-binding</keyword>
<keyword id="KW-0934">Plastid</keyword>
<keyword id="KW-0793">Thylakoid</keyword>
<keyword id="KW-0809">Transit peptide</keyword>
<keyword id="KW-0813">Transport</keyword>
<feature type="transit peptide" description="Chloroplast" evidence="4">
    <location>
        <begin position="1"/>
        <end position="48"/>
    </location>
</feature>
<feature type="chain" id="PRO_0000002895" description="Plastocyanin, chloroplastic">
    <location>
        <begin position="49"/>
        <end position="145"/>
    </location>
</feature>
<feature type="domain" description="Plastocyanin-like">
    <location>
        <begin position="49"/>
        <end position="145"/>
    </location>
</feature>
<feature type="binding site" evidence="1">
    <location>
        <position position="85"/>
    </location>
    <ligand>
        <name>Cu cation</name>
        <dbReference type="ChEBI" id="CHEBI:23378"/>
    </ligand>
</feature>
<feature type="binding site" evidence="1">
    <location>
        <position position="130"/>
    </location>
    <ligand>
        <name>Cu cation</name>
        <dbReference type="ChEBI" id="CHEBI:23378"/>
    </ligand>
</feature>
<feature type="binding site" evidence="1">
    <location>
        <position position="133"/>
    </location>
    <ligand>
        <name>Cu cation</name>
        <dbReference type="ChEBI" id="CHEBI:23378"/>
    </ligand>
</feature>
<feature type="binding site" evidence="1">
    <location>
        <position position="138"/>
    </location>
    <ligand>
        <name>Cu cation</name>
        <dbReference type="ChEBI" id="CHEBI:23378"/>
    </ligand>
</feature>